<name>HEM1_BURTA</name>
<gene>
    <name evidence="1" type="primary">hemA</name>
    <name type="ordered locus">BTH_I2929</name>
</gene>
<keyword id="KW-0521">NADP</keyword>
<keyword id="KW-0560">Oxidoreductase</keyword>
<keyword id="KW-0627">Porphyrin biosynthesis</keyword>
<evidence type="ECO:0000255" key="1">
    <source>
        <dbReference type="HAMAP-Rule" id="MF_00087"/>
    </source>
</evidence>
<evidence type="ECO:0000305" key="2"/>
<dbReference type="EC" id="1.2.1.70" evidence="1"/>
<dbReference type="EMBL" id="CP000086">
    <property type="protein sequence ID" value="ABC36831.1"/>
    <property type="status" value="ALT_INIT"/>
    <property type="molecule type" value="Genomic_DNA"/>
</dbReference>
<dbReference type="RefSeq" id="WP_009888666.1">
    <property type="nucleotide sequence ID" value="NC_007651.1"/>
</dbReference>
<dbReference type="SMR" id="Q2SUG3"/>
<dbReference type="GeneID" id="45122620"/>
<dbReference type="KEGG" id="bte:BTH_I2929"/>
<dbReference type="HOGENOM" id="CLU_035113_2_2_4"/>
<dbReference type="UniPathway" id="UPA00251">
    <property type="reaction ID" value="UER00316"/>
</dbReference>
<dbReference type="Proteomes" id="UP000001930">
    <property type="component" value="Chromosome I"/>
</dbReference>
<dbReference type="GO" id="GO:0008883">
    <property type="term" value="F:glutamyl-tRNA reductase activity"/>
    <property type="evidence" value="ECO:0007669"/>
    <property type="project" value="UniProtKB-UniRule"/>
</dbReference>
<dbReference type="GO" id="GO:0050661">
    <property type="term" value="F:NADP binding"/>
    <property type="evidence" value="ECO:0007669"/>
    <property type="project" value="InterPro"/>
</dbReference>
<dbReference type="GO" id="GO:0019353">
    <property type="term" value="P:protoporphyrinogen IX biosynthetic process from glutamate"/>
    <property type="evidence" value="ECO:0007669"/>
    <property type="project" value="TreeGrafter"/>
</dbReference>
<dbReference type="CDD" id="cd05213">
    <property type="entry name" value="NAD_bind_Glutamyl_tRNA_reduct"/>
    <property type="match status" value="1"/>
</dbReference>
<dbReference type="FunFam" id="3.30.460.30:FF:000001">
    <property type="entry name" value="Glutamyl-tRNA reductase"/>
    <property type="match status" value="1"/>
</dbReference>
<dbReference type="FunFam" id="3.40.50.720:FF:000031">
    <property type="entry name" value="Glutamyl-tRNA reductase"/>
    <property type="match status" value="1"/>
</dbReference>
<dbReference type="Gene3D" id="3.30.460.30">
    <property type="entry name" value="Glutamyl-tRNA reductase, N-terminal domain"/>
    <property type="match status" value="1"/>
</dbReference>
<dbReference type="Gene3D" id="3.40.50.720">
    <property type="entry name" value="NAD(P)-binding Rossmann-like Domain"/>
    <property type="match status" value="1"/>
</dbReference>
<dbReference type="HAMAP" id="MF_00087">
    <property type="entry name" value="Glu_tRNA_reductase"/>
    <property type="match status" value="1"/>
</dbReference>
<dbReference type="InterPro" id="IPR000343">
    <property type="entry name" value="4pyrrol_synth_GluRdtase"/>
</dbReference>
<dbReference type="InterPro" id="IPR015896">
    <property type="entry name" value="4pyrrol_synth_GluRdtase_dimer"/>
</dbReference>
<dbReference type="InterPro" id="IPR015895">
    <property type="entry name" value="4pyrrol_synth_GluRdtase_N"/>
</dbReference>
<dbReference type="InterPro" id="IPR018214">
    <property type="entry name" value="GluRdtase_CS"/>
</dbReference>
<dbReference type="InterPro" id="IPR036453">
    <property type="entry name" value="GluRdtase_dimer_dom_sf"/>
</dbReference>
<dbReference type="InterPro" id="IPR036343">
    <property type="entry name" value="GluRdtase_N_sf"/>
</dbReference>
<dbReference type="InterPro" id="IPR036291">
    <property type="entry name" value="NAD(P)-bd_dom_sf"/>
</dbReference>
<dbReference type="InterPro" id="IPR006151">
    <property type="entry name" value="Shikm_DH/Glu-tRNA_Rdtase"/>
</dbReference>
<dbReference type="NCBIfam" id="TIGR01035">
    <property type="entry name" value="hemA"/>
    <property type="match status" value="1"/>
</dbReference>
<dbReference type="PANTHER" id="PTHR43013">
    <property type="entry name" value="GLUTAMYL-TRNA REDUCTASE"/>
    <property type="match status" value="1"/>
</dbReference>
<dbReference type="PANTHER" id="PTHR43013:SF1">
    <property type="entry name" value="GLUTAMYL-TRNA REDUCTASE"/>
    <property type="match status" value="1"/>
</dbReference>
<dbReference type="Pfam" id="PF00745">
    <property type="entry name" value="GlutR_dimer"/>
    <property type="match status" value="1"/>
</dbReference>
<dbReference type="Pfam" id="PF05201">
    <property type="entry name" value="GlutR_N"/>
    <property type="match status" value="1"/>
</dbReference>
<dbReference type="Pfam" id="PF01488">
    <property type="entry name" value="Shikimate_DH"/>
    <property type="match status" value="1"/>
</dbReference>
<dbReference type="PIRSF" id="PIRSF000445">
    <property type="entry name" value="4pyrrol_synth_GluRdtase"/>
    <property type="match status" value="1"/>
</dbReference>
<dbReference type="SUPFAM" id="SSF69742">
    <property type="entry name" value="Glutamyl tRNA-reductase catalytic, N-terminal domain"/>
    <property type="match status" value="1"/>
</dbReference>
<dbReference type="SUPFAM" id="SSF69075">
    <property type="entry name" value="Glutamyl tRNA-reductase dimerization domain"/>
    <property type="match status" value="1"/>
</dbReference>
<dbReference type="SUPFAM" id="SSF51735">
    <property type="entry name" value="NAD(P)-binding Rossmann-fold domains"/>
    <property type="match status" value="1"/>
</dbReference>
<dbReference type="PROSITE" id="PS00747">
    <property type="entry name" value="GLUTR"/>
    <property type="match status" value="1"/>
</dbReference>
<protein>
    <recommendedName>
        <fullName evidence="1">Glutamyl-tRNA reductase</fullName>
        <shortName evidence="1">GluTR</shortName>
        <ecNumber evidence="1">1.2.1.70</ecNumber>
    </recommendedName>
</protein>
<comment type="function">
    <text evidence="1">Catalyzes the NADPH-dependent reduction of glutamyl-tRNA(Glu) to glutamate 1-semialdehyde (GSA).</text>
</comment>
<comment type="catalytic activity">
    <reaction evidence="1">
        <text>(S)-4-amino-5-oxopentanoate + tRNA(Glu) + NADP(+) = L-glutamyl-tRNA(Glu) + NADPH + H(+)</text>
        <dbReference type="Rhea" id="RHEA:12344"/>
        <dbReference type="Rhea" id="RHEA-COMP:9663"/>
        <dbReference type="Rhea" id="RHEA-COMP:9680"/>
        <dbReference type="ChEBI" id="CHEBI:15378"/>
        <dbReference type="ChEBI" id="CHEBI:57501"/>
        <dbReference type="ChEBI" id="CHEBI:57783"/>
        <dbReference type="ChEBI" id="CHEBI:58349"/>
        <dbReference type="ChEBI" id="CHEBI:78442"/>
        <dbReference type="ChEBI" id="CHEBI:78520"/>
        <dbReference type="EC" id="1.2.1.70"/>
    </reaction>
</comment>
<comment type="pathway">
    <text evidence="1">Porphyrin-containing compound metabolism; protoporphyrin-IX biosynthesis; 5-aminolevulinate from L-glutamyl-tRNA(Glu): step 1/2.</text>
</comment>
<comment type="subunit">
    <text evidence="1">Homodimer.</text>
</comment>
<comment type="domain">
    <text evidence="1">Possesses an unusual extended V-shaped dimeric structure with each monomer consisting of three distinct domains arranged along a curved 'spinal' alpha-helix. The N-terminal catalytic domain specifically recognizes the glutamate moiety of the substrate. The second domain is the NADPH-binding domain, and the third C-terminal domain is responsible for dimerization.</text>
</comment>
<comment type="miscellaneous">
    <text evidence="1">During catalysis, the active site Cys acts as a nucleophile attacking the alpha-carbonyl group of tRNA-bound glutamate with the formation of a thioester intermediate between enzyme and glutamate, and the concomitant release of tRNA(Glu). The thioester intermediate is finally reduced by direct hydride transfer from NADPH, to form the product GSA.</text>
</comment>
<comment type="similarity">
    <text evidence="1">Belongs to the glutamyl-tRNA reductase family.</text>
</comment>
<comment type="sequence caution" evidence="2">
    <conflict type="erroneous initiation">
        <sequence resource="EMBL-CDS" id="ABC36831"/>
    </conflict>
</comment>
<accession>Q2SUG3</accession>
<sequence>MQLLTIGINHHTAPVALRERVAFPLEQIKPALSTFKSVFLGHPAPNAPEAAILSTCNRTELYCATDDRAARDAAIRWMSDYHRIPADELAPHVYALPQSEAVRHAFRVASGLDSMVLGETQILGQMKNAVRTASEAGSLGTYLNQLFQRTFAVAKEVRGTTEIGAQSVSMAAAAVRLAQRIFEQVAQQRVLFIGAGEMIELCATHFAAQGPRELVVANRTAERGAKLAERFGGRAMPLSDLPARMHEFDIIVSCTASTLPIIGLGAVERAVKARRHRPIFMVDLAVPRDIEPEVGKLKDVFLYTVDDLGAIVREGNASRQAAVAQAEAIIETRVQNFMQWLDARSIVPVIRHMHTQADALRRAELERARKMLARGDDPAAVLDALSQALTNKLIHGPTSALNRANGADRDSLIDLMRGFYQHAPRSSDTSDH</sequence>
<proteinExistence type="inferred from homology"/>
<reference key="1">
    <citation type="journal article" date="2005" name="BMC Genomics">
        <title>Bacterial genome adaptation to niches: divergence of the potential virulence genes in three Burkholderia species of different survival strategies.</title>
        <authorList>
            <person name="Kim H.S."/>
            <person name="Schell M.A."/>
            <person name="Yu Y."/>
            <person name="Ulrich R.L."/>
            <person name="Sarria S.H."/>
            <person name="Nierman W.C."/>
            <person name="DeShazer D."/>
        </authorList>
    </citation>
    <scope>NUCLEOTIDE SEQUENCE [LARGE SCALE GENOMIC DNA]</scope>
    <source>
        <strain>ATCC 700388 / DSM 13276 / CCUG 48851 / CIP 106301 / E264</strain>
    </source>
</reference>
<organism>
    <name type="scientific">Burkholderia thailandensis (strain ATCC 700388 / DSM 13276 / CCUG 48851 / CIP 106301 / E264)</name>
    <dbReference type="NCBI Taxonomy" id="271848"/>
    <lineage>
        <taxon>Bacteria</taxon>
        <taxon>Pseudomonadati</taxon>
        <taxon>Pseudomonadota</taxon>
        <taxon>Betaproteobacteria</taxon>
        <taxon>Burkholderiales</taxon>
        <taxon>Burkholderiaceae</taxon>
        <taxon>Burkholderia</taxon>
        <taxon>pseudomallei group</taxon>
    </lineage>
</organism>
<feature type="chain" id="PRO_0000335019" description="Glutamyl-tRNA reductase">
    <location>
        <begin position="1"/>
        <end position="432"/>
    </location>
</feature>
<feature type="active site" description="Nucleophile" evidence="1">
    <location>
        <position position="56"/>
    </location>
</feature>
<feature type="binding site" evidence="1">
    <location>
        <begin position="55"/>
        <end position="58"/>
    </location>
    <ligand>
        <name>substrate</name>
    </ligand>
</feature>
<feature type="binding site" evidence="1">
    <location>
        <position position="114"/>
    </location>
    <ligand>
        <name>substrate</name>
    </ligand>
</feature>
<feature type="binding site" evidence="1">
    <location>
        <begin position="119"/>
        <end position="121"/>
    </location>
    <ligand>
        <name>substrate</name>
    </ligand>
</feature>
<feature type="binding site" evidence="1">
    <location>
        <position position="125"/>
    </location>
    <ligand>
        <name>substrate</name>
    </ligand>
</feature>
<feature type="binding site" evidence="1">
    <location>
        <begin position="194"/>
        <end position="199"/>
    </location>
    <ligand>
        <name>NADP(+)</name>
        <dbReference type="ChEBI" id="CHEBI:58349"/>
    </ligand>
</feature>
<feature type="site" description="Important for activity" evidence="1">
    <location>
        <position position="104"/>
    </location>
</feature>